<organism>
    <name type="scientific">Coxiella burnetii (strain RSA 493 / Nine Mile phase I)</name>
    <dbReference type="NCBI Taxonomy" id="227377"/>
    <lineage>
        <taxon>Bacteria</taxon>
        <taxon>Pseudomonadati</taxon>
        <taxon>Pseudomonadota</taxon>
        <taxon>Gammaproteobacteria</taxon>
        <taxon>Legionellales</taxon>
        <taxon>Coxiellaceae</taxon>
        <taxon>Coxiella</taxon>
    </lineage>
</organism>
<accession>Q83BM5</accession>
<gene>
    <name evidence="2" type="primary">ahpD</name>
    <name type="ordered locus">CBU_1478</name>
</gene>
<evidence type="ECO:0000250" key="1"/>
<evidence type="ECO:0000255" key="2">
    <source>
        <dbReference type="HAMAP-Rule" id="MF_01676"/>
    </source>
</evidence>
<evidence type="ECO:0000305" key="3"/>
<protein>
    <recommendedName>
        <fullName evidence="2">Alkyl hydroperoxide reductase AhpD</fullName>
        <ecNumber evidence="2">1.11.1.28</ecNumber>
    </recommendedName>
    <alternativeName>
        <fullName evidence="2">Alkylhydroperoxidase AhpD</fullName>
    </alternativeName>
</protein>
<keyword id="KW-0049">Antioxidant</keyword>
<keyword id="KW-1015">Disulfide bond</keyword>
<keyword id="KW-0560">Oxidoreductase</keyword>
<keyword id="KW-0575">Peroxidase</keyword>
<keyword id="KW-0676">Redox-active center</keyword>
<keyword id="KW-1185">Reference proteome</keyword>
<comment type="function">
    <text evidence="2">Antioxidant protein with alkyl hydroperoxidase activity. Required for the reduction of the AhpC active site cysteine residues and for the regeneration of the AhpC enzyme activity.</text>
</comment>
<comment type="catalytic activity">
    <reaction evidence="2">
        <text>N(6)-[(R)-dihydrolipoyl]-L-lysyl-[lipoyl-carrier protein] + a hydroperoxide = N(6)-[(R)-lipoyl]-L-lysyl-[lipoyl-carrier protein] + an alcohol + H2O</text>
        <dbReference type="Rhea" id="RHEA:62636"/>
        <dbReference type="Rhea" id="RHEA-COMP:10502"/>
        <dbReference type="Rhea" id="RHEA-COMP:16355"/>
        <dbReference type="ChEBI" id="CHEBI:15377"/>
        <dbReference type="ChEBI" id="CHEBI:30879"/>
        <dbReference type="ChEBI" id="CHEBI:35924"/>
        <dbReference type="ChEBI" id="CHEBI:83099"/>
        <dbReference type="ChEBI" id="CHEBI:83100"/>
        <dbReference type="EC" id="1.11.1.28"/>
    </reaction>
</comment>
<comment type="similarity">
    <text evidence="2">Belongs to the AhpD family.</text>
</comment>
<comment type="sequence caution" evidence="3">
    <conflict type="erroneous initiation">
        <sequence resource="EMBL-CDS" id="AAO90975"/>
    </conflict>
    <text>Extended N-terminus.</text>
</comment>
<reference key="1">
    <citation type="journal article" date="2003" name="Proc. Natl. Acad. Sci. U.S.A.">
        <title>Complete genome sequence of the Q-fever pathogen, Coxiella burnetii.</title>
        <authorList>
            <person name="Seshadri R."/>
            <person name="Paulsen I.T."/>
            <person name="Eisen J.A."/>
            <person name="Read T.D."/>
            <person name="Nelson K.E."/>
            <person name="Nelson W.C."/>
            <person name="Ward N.L."/>
            <person name="Tettelin H."/>
            <person name="Davidsen T.M."/>
            <person name="Beanan M.J."/>
            <person name="DeBoy R.T."/>
            <person name="Daugherty S.C."/>
            <person name="Brinkac L.M."/>
            <person name="Madupu R."/>
            <person name="Dodson R.J."/>
            <person name="Khouri H.M."/>
            <person name="Lee K.H."/>
            <person name="Carty H.A."/>
            <person name="Scanlan D."/>
            <person name="Heinzen R.A."/>
            <person name="Thompson H.A."/>
            <person name="Samuel J.E."/>
            <person name="Fraser C.M."/>
            <person name="Heidelberg J.F."/>
        </authorList>
    </citation>
    <scope>NUCLEOTIDE SEQUENCE [LARGE SCALE GENOMIC DNA]</scope>
    <source>
        <strain>RSA 493 / Nine Mile phase I</strain>
    </source>
</reference>
<proteinExistence type="inferred from homology"/>
<name>AHPD_COXBU</name>
<sequence length="177" mass="19564">MLQTYKDQLPDYAKDLKLNLTQVLSESPSSELSNQQITGVALAVAYATRNRQLIELIFQKAEAELDESTLQAIKAAASIMAMNNIYYRFVHLVKDSEYQRLPANLRMNIIANPGIDKKDFELYSLAVSAINGCGLCIDAHANTLIKAGFSKHSIQHVIRIAAVLNGLAQVSIIENKT</sequence>
<dbReference type="EC" id="1.11.1.28" evidence="2"/>
<dbReference type="EMBL" id="AE016828">
    <property type="protein sequence ID" value="AAO90975.2"/>
    <property type="status" value="ALT_INIT"/>
    <property type="molecule type" value="Genomic_DNA"/>
</dbReference>
<dbReference type="RefSeq" id="NP_820461.2">
    <property type="nucleotide sequence ID" value="NC_002971.3"/>
</dbReference>
<dbReference type="RefSeq" id="WP_010958252.1">
    <property type="nucleotide sequence ID" value="NC_002971.4"/>
</dbReference>
<dbReference type="RefSeq" id="WP_012220673.1">
    <property type="nucleotide sequence ID" value="NZ_CCYB01000024.1"/>
</dbReference>
<dbReference type="SMR" id="Q83BM5"/>
<dbReference type="STRING" id="227377.CBU_1478"/>
<dbReference type="PeroxiBase" id="4610">
    <property type="entry name" value="CbuAhpD_RSA493"/>
</dbReference>
<dbReference type="EnsemblBacteria" id="AAO90975">
    <property type="protein sequence ID" value="AAO90975"/>
    <property type="gene ID" value="CBU_1478"/>
</dbReference>
<dbReference type="GeneID" id="1209388"/>
<dbReference type="KEGG" id="cbu:CBU_1478"/>
<dbReference type="PATRIC" id="fig|227377.7.peg.1478"/>
<dbReference type="eggNOG" id="COG0599">
    <property type="taxonomic scope" value="Bacteria"/>
</dbReference>
<dbReference type="HOGENOM" id="CLU_105328_0_0_6"/>
<dbReference type="OrthoDB" id="9801997at2"/>
<dbReference type="Proteomes" id="UP000002671">
    <property type="component" value="Chromosome"/>
</dbReference>
<dbReference type="GO" id="GO:0008785">
    <property type="term" value="F:alkyl hydroperoxide reductase activity"/>
    <property type="evidence" value="ECO:0007669"/>
    <property type="project" value="UniProtKB-UniRule"/>
</dbReference>
<dbReference type="GO" id="GO:0015036">
    <property type="term" value="F:disulfide oxidoreductase activity"/>
    <property type="evidence" value="ECO:0000318"/>
    <property type="project" value="GO_Central"/>
</dbReference>
<dbReference type="GO" id="GO:0032843">
    <property type="term" value="F:hydroperoxide reductase activity"/>
    <property type="evidence" value="ECO:0000318"/>
    <property type="project" value="GO_Central"/>
</dbReference>
<dbReference type="GO" id="GO:0051920">
    <property type="term" value="F:peroxiredoxin activity"/>
    <property type="evidence" value="ECO:0007669"/>
    <property type="project" value="InterPro"/>
</dbReference>
<dbReference type="GO" id="GO:0045454">
    <property type="term" value="P:cell redox homeostasis"/>
    <property type="evidence" value="ECO:0000318"/>
    <property type="project" value="GO_Central"/>
</dbReference>
<dbReference type="GO" id="GO:0006979">
    <property type="term" value="P:response to oxidative stress"/>
    <property type="evidence" value="ECO:0007669"/>
    <property type="project" value="InterPro"/>
</dbReference>
<dbReference type="Gene3D" id="1.20.1290.10">
    <property type="entry name" value="AhpD-like"/>
    <property type="match status" value="1"/>
</dbReference>
<dbReference type="HAMAP" id="MF_01676">
    <property type="entry name" value="AhpD"/>
    <property type="match status" value="1"/>
</dbReference>
<dbReference type="InterPro" id="IPR004674">
    <property type="entry name" value="AhpD"/>
</dbReference>
<dbReference type="InterPro" id="IPR029032">
    <property type="entry name" value="AhpD-like"/>
</dbReference>
<dbReference type="InterPro" id="IPR004675">
    <property type="entry name" value="AhpD_core"/>
</dbReference>
<dbReference type="InterPro" id="IPR003779">
    <property type="entry name" value="CMD-like"/>
</dbReference>
<dbReference type="NCBIfam" id="TIGR00778">
    <property type="entry name" value="ahpD_dom"/>
    <property type="match status" value="1"/>
</dbReference>
<dbReference type="PANTHER" id="PTHR33930">
    <property type="entry name" value="ALKYL HYDROPEROXIDE REDUCTASE AHPD"/>
    <property type="match status" value="1"/>
</dbReference>
<dbReference type="PANTHER" id="PTHR33930:SF7">
    <property type="entry name" value="ALKYL HYDROPEROXIDE REDUCTASE AHPD"/>
    <property type="match status" value="1"/>
</dbReference>
<dbReference type="Pfam" id="PF02627">
    <property type="entry name" value="CMD"/>
    <property type="match status" value="1"/>
</dbReference>
<dbReference type="SUPFAM" id="SSF69118">
    <property type="entry name" value="AhpD-like"/>
    <property type="match status" value="1"/>
</dbReference>
<feature type="chain" id="PRO_0000359485" description="Alkyl hydroperoxide reductase AhpD">
    <location>
        <begin position="1"/>
        <end position="177"/>
    </location>
</feature>
<feature type="active site" description="Proton donor" evidence="2">
    <location>
        <position position="133"/>
    </location>
</feature>
<feature type="active site" description="Cysteine sulfenic acid (-SOH) intermediate" evidence="2">
    <location>
        <position position="136"/>
    </location>
</feature>
<feature type="disulfide bond" evidence="1">
    <location>
        <begin position="133"/>
        <end position="136"/>
    </location>
</feature>
<feature type="disulfide bond" description="Interchain (with AhpC); in linked form" evidence="2">
    <location>
        <position position="136"/>
    </location>
</feature>